<evidence type="ECO:0000255" key="1">
    <source>
        <dbReference type="HAMAP-Rule" id="MF_00037"/>
    </source>
</evidence>
<evidence type="ECO:0000305" key="2"/>
<accession>A4ILI2</accession>
<protein>
    <recommendedName>
        <fullName evidence="1">UDP-N-acetylenolpyruvoylglucosamine reductase</fullName>
        <ecNumber evidence="1">1.3.1.98</ecNumber>
    </recommendedName>
    <alternativeName>
        <fullName evidence="1">UDP-N-acetylmuramate dehydrogenase</fullName>
    </alternativeName>
</protein>
<proteinExistence type="inferred from homology"/>
<organism>
    <name type="scientific">Geobacillus thermodenitrificans (strain NG80-2)</name>
    <dbReference type="NCBI Taxonomy" id="420246"/>
    <lineage>
        <taxon>Bacteria</taxon>
        <taxon>Bacillati</taxon>
        <taxon>Bacillota</taxon>
        <taxon>Bacilli</taxon>
        <taxon>Bacillales</taxon>
        <taxon>Anoxybacillaceae</taxon>
        <taxon>Geobacillus</taxon>
    </lineage>
</organism>
<gene>
    <name evidence="1" type="primary">murB</name>
    <name type="ordered locus">GTNG_0808</name>
</gene>
<keyword id="KW-0131">Cell cycle</keyword>
<keyword id="KW-0132">Cell division</keyword>
<keyword id="KW-0133">Cell shape</keyword>
<keyword id="KW-0961">Cell wall biogenesis/degradation</keyword>
<keyword id="KW-0963">Cytoplasm</keyword>
<keyword id="KW-0274">FAD</keyword>
<keyword id="KW-0285">Flavoprotein</keyword>
<keyword id="KW-0521">NADP</keyword>
<keyword id="KW-0560">Oxidoreductase</keyword>
<keyword id="KW-0573">Peptidoglycan synthesis</keyword>
<comment type="function">
    <text evidence="1">Cell wall formation.</text>
</comment>
<comment type="catalytic activity">
    <reaction evidence="1">
        <text>UDP-N-acetyl-alpha-D-muramate + NADP(+) = UDP-N-acetyl-3-O-(1-carboxyvinyl)-alpha-D-glucosamine + NADPH + H(+)</text>
        <dbReference type="Rhea" id="RHEA:12248"/>
        <dbReference type="ChEBI" id="CHEBI:15378"/>
        <dbReference type="ChEBI" id="CHEBI:57783"/>
        <dbReference type="ChEBI" id="CHEBI:58349"/>
        <dbReference type="ChEBI" id="CHEBI:68483"/>
        <dbReference type="ChEBI" id="CHEBI:70757"/>
        <dbReference type="EC" id="1.3.1.98"/>
    </reaction>
</comment>
<comment type="cofactor">
    <cofactor evidence="1">
        <name>FAD</name>
        <dbReference type="ChEBI" id="CHEBI:57692"/>
    </cofactor>
</comment>
<comment type="pathway">
    <text evidence="1">Cell wall biogenesis; peptidoglycan biosynthesis.</text>
</comment>
<comment type="subcellular location">
    <subcellularLocation>
        <location evidence="1">Cytoplasm</location>
    </subcellularLocation>
</comment>
<comment type="similarity">
    <text evidence="1">Belongs to the MurB family.</text>
</comment>
<comment type="sequence caution" evidence="2">
    <conflict type="erroneous initiation">
        <sequence resource="EMBL-CDS" id="ABO66186"/>
    </conflict>
</comment>
<dbReference type="EC" id="1.3.1.98" evidence="1"/>
<dbReference type="EMBL" id="CP000557">
    <property type="protein sequence ID" value="ABO66186.1"/>
    <property type="status" value="ALT_INIT"/>
    <property type="molecule type" value="Genomic_DNA"/>
</dbReference>
<dbReference type="RefSeq" id="WP_008878872.1">
    <property type="nucleotide sequence ID" value="NC_009328.1"/>
</dbReference>
<dbReference type="SMR" id="A4ILI2"/>
<dbReference type="GeneID" id="87621591"/>
<dbReference type="KEGG" id="gtn:GTNG_0808"/>
<dbReference type="eggNOG" id="COG0812">
    <property type="taxonomic scope" value="Bacteria"/>
</dbReference>
<dbReference type="HOGENOM" id="CLU_035304_1_1_9"/>
<dbReference type="UniPathway" id="UPA00219"/>
<dbReference type="Proteomes" id="UP000001578">
    <property type="component" value="Chromosome"/>
</dbReference>
<dbReference type="GO" id="GO:0005829">
    <property type="term" value="C:cytosol"/>
    <property type="evidence" value="ECO:0007669"/>
    <property type="project" value="TreeGrafter"/>
</dbReference>
<dbReference type="GO" id="GO:0071949">
    <property type="term" value="F:FAD binding"/>
    <property type="evidence" value="ECO:0007669"/>
    <property type="project" value="InterPro"/>
</dbReference>
<dbReference type="GO" id="GO:0008762">
    <property type="term" value="F:UDP-N-acetylmuramate dehydrogenase activity"/>
    <property type="evidence" value="ECO:0007669"/>
    <property type="project" value="UniProtKB-UniRule"/>
</dbReference>
<dbReference type="GO" id="GO:0051301">
    <property type="term" value="P:cell division"/>
    <property type="evidence" value="ECO:0007669"/>
    <property type="project" value="UniProtKB-KW"/>
</dbReference>
<dbReference type="GO" id="GO:0071555">
    <property type="term" value="P:cell wall organization"/>
    <property type="evidence" value="ECO:0007669"/>
    <property type="project" value="UniProtKB-KW"/>
</dbReference>
<dbReference type="GO" id="GO:0009252">
    <property type="term" value="P:peptidoglycan biosynthetic process"/>
    <property type="evidence" value="ECO:0007669"/>
    <property type="project" value="UniProtKB-UniRule"/>
</dbReference>
<dbReference type="GO" id="GO:0008360">
    <property type="term" value="P:regulation of cell shape"/>
    <property type="evidence" value="ECO:0007669"/>
    <property type="project" value="UniProtKB-KW"/>
</dbReference>
<dbReference type="Gene3D" id="3.30.465.10">
    <property type="match status" value="1"/>
</dbReference>
<dbReference type="Gene3D" id="3.90.78.10">
    <property type="entry name" value="UDP-N-acetylenolpyruvoylglucosamine reductase, C-terminal domain"/>
    <property type="match status" value="1"/>
</dbReference>
<dbReference type="Gene3D" id="3.30.43.10">
    <property type="entry name" value="Uridine Diphospho-n-acetylenolpyruvylglucosamine Reductase, domain 2"/>
    <property type="match status" value="1"/>
</dbReference>
<dbReference type="HAMAP" id="MF_00037">
    <property type="entry name" value="MurB"/>
    <property type="match status" value="1"/>
</dbReference>
<dbReference type="InterPro" id="IPR016166">
    <property type="entry name" value="FAD-bd_PCMH"/>
</dbReference>
<dbReference type="InterPro" id="IPR036318">
    <property type="entry name" value="FAD-bd_PCMH-like_sf"/>
</dbReference>
<dbReference type="InterPro" id="IPR016167">
    <property type="entry name" value="FAD-bd_PCMH_sub1"/>
</dbReference>
<dbReference type="InterPro" id="IPR016169">
    <property type="entry name" value="FAD-bd_PCMH_sub2"/>
</dbReference>
<dbReference type="InterPro" id="IPR003170">
    <property type="entry name" value="MurB"/>
</dbReference>
<dbReference type="InterPro" id="IPR011601">
    <property type="entry name" value="MurB_C"/>
</dbReference>
<dbReference type="InterPro" id="IPR036635">
    <property type="entry name" value="MurB_C_sf"/>
</dbReference>
<dbReference type="InterPro" id="IPR006094">
    <property type="entry name" value="Oxid_FAD_bind_N"/>
</dbReference>
<dbReference type="NCBIfam" id="TIGR00179">
    <property type="entry name" value="murB"/>
    <property type="match status" value="1"/>
</dbReference>
<dbReference type="NCBIfam" id="NF010480">
    <property type="entry name" value="PRK13905.1"/>
    <property type="match status" value="1"/>
</dbReference>
<dbReference type="PANTHER" id="PTHR21071">
    <property type="entry name" value="UDP-N-ACETYLENOLPYRUVOYLGLUCOSAMINE REDUCTASE"/>
    <property type="match status" value="1"/>
</dbReference>
<dbReference type="PANTHER" id="PTHR21071:SF4">
    <property type="entry name" value="UDP-N-ACETYLENOLPYRUVOYLGLUCOSAMINE REDUCTASE"/>
    <property type="match status" value="1"/>
</dbReference>
<dbReference type="Pfam" id="PF01565">
    <property type="entry name" value="FAD_binding_4"/>
    <property type="match status" value="1"/>
</dbReference>
<dbReference type="Pfam" id="PF02873">
    <property type="entry name" value="MurB_C"/>
    <property type="match status" value="1"/>
</dbReference>
<dbReference type="SUPFAM" id="SSF56176">
    <property type="entry name" value="FAD-binding/transporter-associated domain-like"/>
    <property type="match status" value="1"/>
</dbReference>
<dbReference type="SUPFAM" id="SSF56194">
    <property type="entry name" value="Uridine diphospho-N-Acetylenolpyruvylglucosamine reductase, MurB, C-terminal domain"/>
    <property type="match status" value="1"/>
</dbReference>
<dbReference type="PROSITE" id="PS51387">
    <property type="entry name" value="FAD_PCMH"/>
    <property type="match status" value="1"/>
</dbReference>
<feature type="chain" id="PRO_0000332460" description="UDP-N-acetylenolpyruvoylglucosamine reductase">
    <location>
        <begin position="1"/>
        <end position="304"/>
    </location>
</feature>
<feature type="domain" description="FAD-binding PCMH-type" evidence="1">
    <location>
        <begin position="34"/>
        <end position="198"/>
    </location>
</feature>
<feature type="active site" evidence="1">
    <location>
        <position position="177"/>
    </location>
</feature>
<feature type="active site" description="Proton donor" evidence="1">
    <location>
        <position position="227"/>
    </location>
</feature>
<feature type="active site" evidence="1">
    <location>
        <position position="297"/>
    </location>
</feature>
<name>MURB_GEOTN</name>
<reference key="1">
    <citation type="journal article" date="2007" name="Proc. Natl. Acad. Sci. U.S.A.">
        <title>Genome and proteome of long-chain alkane degrading Geobacillus thermodenitrificans NG80-2 isolated from a deep-subsurface oil reservoir.</title>
        <authorList>
            <person name="Feng L."/>
            <person name="Wang W."/>
            <person name="Cheng J."/>
            <person name="Ren Y."/>
            <person name="Zhao G."/>
            <person name="Gao C."/>
            <person name="Tang Y."/>
            <person name="Liu X."/>
            <person name="Han W."/>
            <person name="Peng X."/>
            <person name="Liu R."/>
            <person name="Wang L."/>
        </authorList>
    </citation>
    <scope>NUCLEOTIDE SEQUENCE [LARGE SCALE GENOMIC DNA]</scope>
    <source>
        <strain>NG80-2</strain>
    </source>
</reference>
<sequence>MERAEHIYQKLVAICGEENVLRDEPMKHHTLVRIGGKADFLVWPETYEQVVDVLRLKEEYELPFTLLGNGSNVIIRDGGLRGIVMQLKHLNRIWREGNNIIAQSGADIKAVSRFALEQHLTGLEFACGIPGSVGGAIMMNAGAYGGEVKDVLDHVKVATLTGELKTLTNEELELGYRTSLISRTHDIVLEVVFALQPGDYGQIKAKMDDLTFQRESKQPLEYPSVGSVFKRPPGYFAGKLIQDSGLQGKGFGGAEVSTKHAGFIINKNNATAADYIATIEMVRKTVKEKFGVELELEVKILGEE</sequence>